<comment type="function">
    <text evidence="1">F(1)F(0) ATP synthase produces ATP from ADP in the presence of a proton or sodium gradient. F-type ATPases consist of two structural domains, F(1) containing the extramembraneous catalytic core and F(0) containing the membrane proton channel, linked together by a central stalk and a peripheral stalk. During catalysis, ATP synthesis in the catalytic domain of F(1) is coupled via a rotary mechanism of the central stalk subunits to proton translocation.</text>
</comment>
<comment type="function">
    <text evidence="1">Component of the F(0) channel, it forms part of the peripheral stalk, linking F(1) to F(0). The b'-subunit is a diverged and duplicated form of b found in plants and photosynthetic bacteria.</text>
</comment>
<comment type="subunit">
    <text evidence="1">F-type ATPases have 2 components, F(1) - the catalytic core - and F(0) - the membrane proton channel. F(1) has five subunits: alpha(3), beta(3), gamma(1), delta(1), epsilon(1). F(0) has four main subunits: a(1), b(1), b'(1) and c(10-14). The alpha and beta chains form an alternating ring which encloses part of the gamma chain. F(1) is attached to F(0) by a central stalk formed by the gamma and epsilon chains, while a peripheral stalk is formed by the delta, b and b' chains.</text>
</comment>
<comment type="subcellular location">
    <subcellularLocation>
        <location evidence="1">Cellular thylakoid membrane</location>
        <topology evidence="1">Single-pass membrane protein</topology>
    </subcellularLocation>
</comment>
<comment type="similarity">
    <text evidence="1">Belongs to the ATPase B chain family.</text>
</comment>
<feature type="chain" id="PRO_0000369024" description="ATP synthase subunit b'">
    <location>
        <begin position="1"/>
        <end position="153"/>
    </location>
</feature>
<feature type="transmembrane region" description="Helical" evidence="1">
    <location>
        <begin position="23"/>
        <end position="40"/>
    </location>
</feature>
<reference key="1">
    <citation type="journal article" date="2007" name="PLoS Genet.">
        <title>Patterns and implications of gene gain and loss in the evolution of Prochlorococcus.</title>
        <authorList>
            <person name="Kettler G.C."/>
            <person name="Martiny A.C."/>
            <person name="Huang K."/>
            <person name="Zucker J."/>
            <person name="Coleman M.L."/>
            <person name="Rodrigue S."/>
            <person name="Chen F."/>
            <person name="Lapidus A."/>
            <person name="Ferriera S."/>
            <person name="Johnson J."/>
            <person name="Steglich C."/>
            <person name="Church G.M."/>
            <person name="Richardson P."/>
            <person name="Chisholm S.W."/>
        </authorList>
    </citation>
    <scope>NUCLEOTIDE SEQUENCE [LARGE SCALE GENOMIC DNA]</scope>
    <source>
        <strain>MIT 9301</strain>
    </source>
</reference>
<proteinExistence type="inferred from homology"/>
<name>ATPF2_PROM0</name>
<sequence>MLAFNFFGATEGGLFDINATLPLMAIQVVALTYILNSLFFKPVGNVVEKREKFVSNNVIEAKNKLSEVKKLEADLLTQLQSARTEAQRIVSEAEDESDKLYKEALELANNEANASKEKARLEIESQTSAARDQLSKQADVLSELIVNRLILEK</sequence>
<gene>
    <name evidence="1" type="primary">atpF2</name>
    <name evidence="1" type="synonym">atpG</name>
    <name type="ordered locus">P9301_16441</name>
</gene>
<protein>
    <recommendedName>
        <fullName evidence="1">ATP synthase subunit b'</fullName>
    </recommendedName>
    <alternativeName>
        <fullName evidence="1">ATP synthase F(0) sector subunit b'</fullName>
    </alternativeName>
    <alternativeName>
        <fullName evidence="1">ATPase subunit II</fullName>
    </alternativeName>
    <alternativeName>
        <fullName evidence="1">F-type ATPase subunit b'</fullName>
        <shortName evidence="1">F-ATPase subunit b'</shortName>
    </alternativeName>
</protein>
<dbReference type="EMBL" id="CP000576">
    <property type="protein sequence ID" value="ABO18267.1"/>
    <property type="molecule type" value="Genomic_DNA"/>
</dbReference>
<dbReference type="RefSeq" id="WP_011863566.1">
    <property type="nucleotide sequence ID" value="NC_009091.1"/>
</dbReference>
<dbReference type="SMR" id="A3PEU2"/>
<dbReference type="STRING" id="167546.P9301_16441"/>
<dbReference type="KEGG" id="pmg:P9301_16441"/>
<dbReference type="eggNOG" id="COG0711">
    <property type="taxonomic scope" value="Bacteria"/>
</dbReference>
<dbReference type="HOGENOM" id="CLU_079215_9_0_3"/>
<dbReference type="OrthoDB" id="426571at2"/>
<dbReference type="Proteomes" id="UP000001430">
    <property type="component" value="Chromosome"/>
</dbReference>
<dbReference type="GO" id="GO:0031676">
    <property type="term" value="C:plasma membrane-derived thylakoid membrane"/>
    <property type="evidence" value="ECO:0007669"/>
    <property type="project" value="UniProtKB-SubCell"/>
</dbReference>
<dbReference type="GO" id="GO:0045259">
    <property type="term" value="C:proton-transporting ATP synthase complex"/>
    <property type="evidence" value="ECO:0007669"/>
    <property type="project" value="UniProtKB-KW"/>
</dbReference>
<dbReference type="GO" id="GO:0046933">
    <property type="term" value="F:proton-transporting ATP synthase activity, rotational mechanism"/>
    <property type="evidence" value="ECO:0007669"/>
    <property type="project" value="UniProtKB-UniRule"/>
</dbReference>
<dbReference type="GO" id="GO:0046961">
    <property type="term" value="F:proton-transporting ATPase activity, rotational mechanism"/>
    <property type="evidence" value="ECO:0007669"/>
    <property type="project" value="TreeGrafter"/>
</dbReference>
<dbReference type="CDD" id="cd06503">
    <property type="entry name" value="ATP-synt_Fo_b"/>
    <property type="match status" value="1"/>
</dbReference>
<dbReference type="Gene3D" id="1.20.5.620">
    <property type="entry name" value="F1F0 ATP synthase subunit B, membrane domain"/>
    <property type="match status" value="1"/>
</dbReference>
<dbReference type="HAMAP" id="MF_01398">
    <property type="entry name" value="ATP_synth_b_bprime"/>
    <property type="match status" value="1"/>
</dbReference>
<dbReference type="HAMAP" id="MF_01399">
    <property type="entry name" value="ATP_synth_bprime"/>
    <property type="match status" value="1"/>
</dbReference>
<dbReference type="InterPro" id="IPR034679">
    <property type="entry name" value="ATP_synth_b"/>
</dbReference>
<dbReference type="InterPro" id="IPR028987">
    <property type="entry name" value="ATP_synth_B-like_membr_sf"/>
</dbReference>
<dbReference type="InterPro" id="IPR002146">
    <property type="entry name" value="ATP_synth_b/b'su_bac/chlpt"/>
</dbReference>
<dbReference type="InterPro" id="IPR050059">
    <property type="entry name" value="ATP_synthase_B_chain"/>
</dbReference>
<dbReference type="NCBIfam" id="NF005607">
    <property type="entry name" value="PRK07353.1"/>
    <property type="match status" value="1"/>
</dbReference>
<dbReference type="PANTHER" id="PTHR33445">
    <property type="entry name" value="ATP SYNTHASE SUBUNIT B', CHLOROPLASTIC"/>
    <property type="match status" value="1"/>
</dbReference>
<dbReference type="PANTHER" id="PTHR33445:SF2">
    <property type="entry name" value="ATP SYNTHASE SUBUNIT B', CHLOROPLASTIC"/>
    <property type="match status" value="1"/>
</dbReference>
<dbReference type="Pfam" id="PF00430">
    <property type="entry name" value="ATP-synt_B"/>
    <property type="match status" value="1"/>
</dbReference>
<dbReference type="SUPFAM" id="SSF81573">
    <property type="entry name" value="F1F0 ATP synthase subunit B, membrane domain"/>
    <property type="match status" value="1"/>
</dbReference>
<organism>
    <name type="scientific">Prochlorococcus marinus (strain MIT 9301)</name>
    <dbReference type="NCBI Taxonomy" id="167546"/>
    <lineage>
        <taxon>Bacteria</taxon>
        <taxon>Bacillati</taxon>
        <taxon>Cyanobacteriota</taxon>
        <taxon>Cyanophyceae</taxon>
        <taxon>Synechococcales</taxon>
        <taxon>Prochlorococcaceae</taxon>
        <taxon>Prochlorococcus</taxon>
    </lineage>
</organism>
<accession>A3PEU2</accession>
<keyword id="KW-0066">ATP synthesis</keyword>
<keyword id="KW-0138">CF(0)</keyword>
<keyword id="KW-0375">Hydrogen ion transport</keyword>
<keyword id="KW-0406">Ion transport</keyword>
<keyword id="KW-0472">Membrane</keyword>
<keyword id="KW-1185">Reference proteome</keyword>
<keyword id="KW-0793">Thylakoid</keyword>
<keyword id="KW-0812">Transmembrane</keyword>
<keyword id="KW-1133">Transmembrane helix</keyword>
<keyword id="KW-0813">Transport</keyword>
<evidence type="ECO:0000255" key="1">
    <source>
        <dbReference type="HAMAP-Rule" id="MF_01399"/>
    </source>
</evidence>